<name>MYB98_ARATH</name>
<keyword id="KW-0238">DNA-binding</keyword>
<keyword id="KW-0539">Nucleus</keyword>
<keyword id="KW-1185">Reference proteome</keyword>
<keyword id="KW-0677">Repeat</keyword>
<keyword id="KW-0804">Transcription</keyword>
<keyword id="KW-0805">Transcription regulation</keyword>
<dbReference type="EMBL" id="AF176003">
    <property type="protein sequence ID" value="AAD53108.1"/>
    <property type="molecule type" value="mRNA"/>
</dbReference>
<dbReference type="EMBL" id="DQ198082">
    <property type="protein sequence ID" value="ABA42061.1"/>
    <property type="molecule type" value="mRNA"/>
</dbReference>
<dbReference type="EMBL" id="AL035526">
    <property type="protein sequence ID" value="CAB37462.1"/>
    <property type="molecule type" value="Genomic_DNA"/>
</dbReference>
<dbReference type="EMBL" id="AL161549">
    <property type="protein sequence ID" value="CAB78879.1"/>
    <property type="molecule type" value="Genomic_DNA"/>
</dbReference>
<dbReference type="EMBL" id="CP002687">
    <property type="protein sequence ID" value="AEE84088.1"/>
    <property type="molecule type" value="Genomic_DNA"/>
</dbReference>
<dbReference type="EMBL" id="DQ446849">
    <property type="protein sequence ID" value="ABE66076.1"/>
    <property type="molecule type" value="mRNA"/>
</dbReference>
<dbReference type="EMBL" id="DQ653207">
    <property type="protein sequence ID" value="ABK28639.1"/>
    <property type="status" value="ALT_SEQ"/>
    <property type="molecule type" value="mRNA"/>
</dbReference>
<dbReference type="PIR" id="T04869">
    <property type="entry name" value="T04869"/>
</dbReference>
<dbReference type="RefSeq" id="NP_193612.1">
    <property type="nucleotide sequence ID" value="NM_117993.3"/>
</dbReference>
<dbReference type="SMR" id="Q9S7L2"/>
<dbReference type="BioGRID" id="12904">
    <property type="interactions" value="4"/>
</dbReference>
<dbReference type="STRING" id="3702.Q9S7L2"/>
<dbReference type="PaxDb" id="3702-AT4G18770.1"/>
<dbReference type="EnsemblPlants" id="AT4G18770.1">
    <property type="protein sequence ID" value="AT4G18770.1"/>
    <property type="gene ID" value="AT4G18770"/>
</dbReference>
<dbReference type="GeneID" id="827611"/>
<dbReference type="Gramene" id="AT4G18770.1">
    <property type="protein sequence ID" value="AT4G18770.1"/>
    <property type="gene ID" value="AT4G18770"/>
</dbReference>
<dbReference type="KEGG" id="ath:AT4G18770"/>
<dbReference type="Araport" id="AT4G18770"/>
<dbReference type="TAIR" id="AT4G18770">
    <property type="gene designation" value="MYB98"/>
</dbReference>
<dbReference type="eggNOG" id="KOG0048">
    <property type="taxonomic scope" value="Eukaryota"/>
</dbReference>
<dbReference type="HOGENOM" id="CLU_028567_9_0_1"/>
<dbReference type="InParanoid" id="Q9S7L2"/>
<dbReference type="OMA" id="CSYQENM"/>
<dbReference type="PhylomeDB" id="Q9S7L2"/>
<dbReference type="PRO" id="PR:Q9S7L2"/>
<dbReference type="Proteomes" id="UP000006548">
    <property type="component" value="Chromosome 4"/>
</dbReference>
<dbReference type="ExpressionAtlas" id="Q9S7L2">
    <property type="expression patterns" value="baseline and differential"/>
</dbReference>
<dbReference type="GO" id="GO:0005634">
    <property type="term" value="C:nucleus"/>
    <property type="evidence" value="ECO:0000314"/>
    <property type="project" value="UniProtKB"/>
</dbReference>
<dbReference type="GO" id="GO:0003700">
    <property type="term" value="F:DNA-binding transcription factor activity"/>
    <property type="evidence" value="ECO:0000314"/>
    <property type="project" value="UniProtKB"/>
</dbReference>
<dbReference type="GO" id="GO:0043565">
    <property type="term" value="F:sequence-specific DNA binding"/>
    <property type="evidence" value="ECO:0000314"/>
    <property type="project" value="UniProtKB"/>
</dbReference>
<dbReference type="GO" id="GO:0000976">
    <property type="term" value="F:transcription cis-regulatory region binding"/>
    <property type="evidence" value="ECO:0000314"/>
    <property type="project" value="UniProtKB"/>
</dbReference>
<dbReference type="GO" id="GO:0009553">
    <property type="term" value="P:embryo sac development"/>
    <property type="evidence" value="ECO:0000315"/>
    <property type="project" value="TAIR"/>
</dbReference>
<dbReference type="GO" id="GO:0010183">
    <property type="term" value="P:pollen tube guidance"/>
    <property type="evidence" value="ECO:0000315"/>
    <property type="project" value="UniProtKB"/>
</dbReference>
<dbReference type="GO" id="GO:0006355">
    <property type="term" value="P:regulation of DNA-templated transcription"/>
    <property type="evidence" value="ECO:0000314"/>
    <property type="project" value="UniProtKB"/>
</dbReference>
<dbReference type="GO" id="GO:0045691">
    <property type="term" value="P:regulation of embryo sac central cell differentiation"/>
    <property type="evidence" value="ECO:0000315"/>
    <property type="project" value="UniProtKB"/>
</dbReference>
<dbReference type="GO" id="GO:0045697">
    <property type="term" value="P:regulation of synergid differentiation"/>
    <property type="evidence" value="ECO:0000314"/>
    <property type="project" value="UniProtKB"/>
</dbReference>
<dbReference type="CDD" id="cd00167">
    <property type="entry name" value="SANT"/>
    <property type="match status" value="2"/>
</dbReference>
<dbReference type="FunFam" id="1.10.10.60:FF:000381">
    <property type="entry name" value="Transcription factor MYB119"/>
    <property type="match status" value="1"/>
</dbReference>
<dbReference type="FunFam" id="1.10.10.60:FF:000010">
    <property type="entry name" value="Transcriptional activator Myb isoform A"/>
    <property type="match status" value="1"/>
</dbReference>
<dbReference type="Gene3D" id="1.10.10.60">
    <property type="entry name" value="Homeodomain-like"/>
    <property type="match status" value="2"/>
</dbReference>
<dbReference type="InterPro" id="IPR009057">
    <property type="entry name" value="Homeodomain-like_sf"/>
</dbReference>
<dbReference type="InterPro" id="IPR017930">
    <property type="entry name" value="Myb_dom"/>
</dbReference>
<dbReference type="InterPro" id="IPR050560">
    <property type="entry name" value="MYB_TF"/>
</dbReference>
<dbReference type="InterPro" id="IPR001005">
    <property type="entry name" value="SANT/Myb"/>
</dbReference>
<dbReference type="PANTHER" id="PTHR45614">
    <property type="entry name" value="MYB PROTEIN-RELATED"/>
    <property type="match status" value="1"/>
</dbReference>
<dbReference type="PANTHER" id="PTHR45614:SF285">
    <property type="entry name" value="TRANSCRIPTION FACTOR MYB98"/>
    <property type="match status" value="1"/>
</dbReference>
<dbReference type="Pfam" id="PF13921">
    <property type="entry name" value="Myb_DNA-bind_6"/>
    <property type="match status" value="1"/>
</dbReference>
<dbReference type="SMART" id="SM00717">
    <property type="entry name" value="SANT"/>
    <property type="match status" value="2"/>
</dbReference>
<dbReference type="SUPFAM" id="SSF46689">
    <property type="entry name" value="Homeodomain-like"/>
    <property type="match status" value="1"/>
</dbReference>
<dbReference type="PROSITE" id="PS51294">
    <property type="entry name" value="HTH_MYB"/>
    <property type="match status" value="2"/>
</dbReference>
<proteinExistence type="evidence at transcript level"/>
<organism>
    <name type="scientific">Arabidopsis thaliana</name>
    <name type="common">Mouse-ear cress</name>
    <dbReference type="NCBI Taxonomy" id="3702"/>
    <lineage>
        <taxon>Eukaryota</taxon>
        <taxon>Viridiplantae</taxon>
        <taxon>Streptophyta</taxon>
        <taxon>Embryophyta</taxon>
        <taxon>Tracheophyta</taxon>
        <taxon>Spermatophyta</taxon>
        <taxon>Magnoliopsida</taxon>
        <taxon>eudicotyledons</taxon>
        <taxon>Gunneridae</taxon>
        <taxon>Pentapetalae</taxon>
        <taxon>rosids</taxon>
        <taxon>malvids</taxon>
        <taxon>Brassicales</taxon>
        <taxon>Brassicaceae</taxon>
        <taxon>Camelineae</taxon>
        <taxon>Arabidopsis</taxon>
    </lineage>
</organism>
<evidence type="ECO:0000255" key="1">
    <source>
        <dbReference type="PROSITE-ProRule" id="PRU00625"/>
    </source>
</evidence>
<evidence type="ECO:0000255" key="2">
    <source>
        <dbReference type="PROSITE-ProRule" id="PRU00768"/>
    </source>
</evidence>
<evidence type="ECO:0000269" key="3">
    <source>
    </source>
</evidence>
<evidence type="ECO:0000269" key="4">
    <source>
    </source>
</evidence>
<evidence type="ECO:0000269" key="5">
    <source>
    </source>
</evidence>
<evidence type="ECO:0000269" key="6">
    <source>
    </source>
</evidence>
<evidence type="ECO:0000269" key="7">
    <source>
    </source>
</evidence>
<evidence type="ECO:0000303" key="8">
    <source>
    </source>
</evidence>
<evidence type="ECO:0000305" key="9"/>
<evidence type="ECO:0000312" key="10">
    <source>
        <dbReference type="Araport" id="AT4G18770"/>
    </source>
</evidence>
<evidence type="ECO:0000312" key="11">
    <source>
        <dbReference type="EMBL" id="CAB37462.1"/>
    </source>
</evidence>
<protein>
    <recommendedName>
        <fullName evidence="8">Transcription factor MYB98</fullName>
    </recommendedName>
    <alternativeName>
        <fullName evidence="8">Myb-related protein 98</fullName>
        <shortName evidence="8">AtMYB98</shortName>
    </alternativeName>
</protein>
<accession>Q9S7L2</accession>
<accession>A0MF81</accession>
<accession>Q3HSE6</accession>
<reference key="1">
    <citation type="journal article" date="2000" name="Plant J.">
        <title>c-MYB oncogene-like genes encoding three MYB repeats occur in all major plant lineages.</title>
        <authorList>
            <person name="Kranz H."/>
            <person name="Scholz K."/>
            <person name="Weisshaar B."/>
        </authorList>
    </citation>
    <scope>NUCLEOTIDE SEQUENCE [MRNA]</scope>
    <source>
        <strain>cv. Columbia</strain>
    </source>
</reference>
<reference key="2">
    <citation type="journal article" date="2005" name="Plant Cell">
        <title>MYB98 is required for pollen tube guidance and synergid cell differentiation in Arabidopsis.</title>
        <authorList>
            <person name="Kasahara R.D."/>
            <person name="Portereiko M.F."/>
            <person name="Sandaklie-Nikolova L."/>
            <person name="Rabiger D.S."/>
            <person name="Drews G.N."/>
        </authorList>
    </citation>
    <scope>NUCLEOTIDE SEQUENCE [MRNA]</scope>
    <scope>FUNCTION</scope>
    <scope>DEVELOPMENTAL STAGE</scope>
    <scope>TISSUE SPECIFICITY</scope>
    <source>
        <strain>cv. Landsberg erecta</strain>
    </source>
</reference>
<reference key="3">
    <citation type="journal article" date="1999" name="Nature">
        <title>Sequence and analysis of chromosome 4 of the plant Arabidopsis thaliana.</title>
        <authorList>
            <person name="Mayer K.F.X."/>
            <person name="Schueller C."/>
            <person name="Wambutt R."/>
            <person name="Murphy G."/>
            <person name="Volckaert G."/>
            <person name="Pohl T."/>
            <person name="Duesterhoeft A."/>
            <person name="Stiekema W."/>
            <person name="Entian K.-D."/>
            <person name="Terryn N."/>
            <person name="Harris B."/>
            <person name="Ansorge W."/>
            <person name="Brandt P."/>
            <person name="Grivell L.A."/>
            <person name="Rieger M."/>
            <person name="Weichselgartner M."/>
            <person name="de Simone V."/>
            <person name="Obermaier B."/>
            <person name="Mache R."/>
            <person name="Mueller M."/>
            <person name="Kreis M."/>
            <person name="Delseny M."/>
            <person name="Puigdomenech P."/>
            <person name="Watson M."/>
            <person name="Schmidtheini T."/>
            <person name="Reichert B."/>
            <person name="Portetelle D."/>
            <person name="Perez-Alonso M."/>
            <person name="Boutry M."/>
            <person name="Bancroft I."/>
            <person name="Vos P."/>
            <person name="Hoheisel J."/>
            <person name="Zimmermann W."/>
            <person name="Wedler H."/>
            <person name="Ridley P."/>
            <person name="Langham S.-A."/>
            <person name="McCullagh B."/>
            <person name="Bilham L."/>
            <person name="Robben J."/>
            <person name="van der Schueren J."/>
            <person name="Grymonprez B."/>
            <person name="Chuang Y.-J."/>
            <person name="Vandenbussche F."/>
            <person name="Braeken M."/>
            <person name="Weltjens I."/>
            <person name="Voet M."/>
            <person name="Bastiaens I."/>
            <person name="Aert R."/>
            <person name="Defoor E."/>
            <person name="Weitzenegger T."/>
            <person name="Bothe G."/>
            <person name="Ramsperger U."/>
            <person name="Hilbert H."/>
            <person name="Braun M."/>
            <person name="Holzer E."/>
            <person name="Brandt A."/>
            <person name="Peters S."/>
            <person name="van Staveren M."/>
            <person name="Dirkse W."/>
            <person name="Mooijman P."/>
            <person name="Klein Lankhorst R."/>
            <person name="Rose M."/>
            <person name="Hauf J."/>
            <person name="Koetter P."/>
            <person name="Berneiser S."/>
            <person name="Hempel S."/>
            <person name="Feldpausch M."/>
            <person name="Lamberth S."/>
            <person name="Van den Daele H."/>
            <person name="De Keyser A."/>
            <person name="Buysshaert C."/>
            <person name="Gielen J."/>
            <person name="Villarroel R."/>
            <person name="De Clercq R."/>
            <person name="van Montagu M."/>
            <person name="Rogers J."/>
            <person name="Cronin A."/>
            <person name="Quail M.A."/>
            <person name="Bray-Allen S."/>
            <person name="Clark L."/>
            <person name="Doggett J."/>
            <person name="Hall S."/>
            <person name="Kay M."/>
            <person name="Lennard N."/>
            <person name="McLay K."/>
            <person name="Mayes R."/>
            <person name="Pettett A."/>
            <person name="Rajandream M.A."/>
            <person name="Lyne M."/>
            <person name="Benes V."/>
            <person name="Rechmann S."/>
            <person name="Borkova D."/>
            <person name="Bloecker H."/>
            <person name="Scharfe M."/>
            <person name="Grimm M."/>
            <person name="Loehnert T.-H."/>
            <person name="Dose S."/>
            <person name="de Haan M."/>
            <person name="Maarse A.C."/>
            <person name="Schaefer M."/>
            <person name="Mueller-Auer S."/>
            <person name="Gabel C."/>
            <person name="Fuchs M."/>
            <person name="Fartmann B."/>
            <person name="Granderath K."/>
            <person name="Dauner D."/>
            <person name="Herzl A."/>
            <person name="Neumann S."/>
            <person name="Argiriou A."/>
            <person name="Vitale D."/>
            <person name="Liguori R."/>
            <person name="Piravandi E."/>
            <person name="Massenet O."/>
            <person name="Quigley F."/>
            <person name="Clabauld G."/>
            <person name="Muendlein A."/>
            <person name="Felber R."/>
            <person name="Schnabl S."/>
            <person name="Hiller R."/>
            <person name="Schmidt W."/>
            <person name="Lecharny A."/>
            <person name="Aubourg S."/>
            <person name="Chefdor F."/>
            <person name="Cooke R."/>
            <person name="Berger C."/>
            <person name="Monfort A."/>
            <person name="Casacuberta E."/>
            <person name="Gibbons T."/>
            <person name="Weber N."/>
            <person name="Vandenbol M."/>
            <person name="Bargues M."/>
            <person name="Terol J."/>
            <person name="Torres A."/>
            <person name="Perez-Perez A."/>
            <person name="Purnelle B."/>
            <person name="Bent E."/>
            <person name="Johnson S."/>
            <person name="Tacon D."/>
            <person name="Jesse T."/>
            <person name="Heijnen L."/>
            <person name="Schwarz S."/>
            <person name="Scholler P."/>
            <person name="Heber S."/>
            <person name="Francs P."/>
            <person name="Bielke C."/>
            <person name="Frishman D."/>
            <person name="Haase D."/>
            <person name="Lemcke K."/>
            <person name="Mewes H.-W."/>
            <person name="Stocker S."/>
            <person name="Zaccaria P."/>
            <person name="Bevan M."/>
            <person name="Wilson R.K."/>
            <person name="de la Bastide M."/>
            <person name="Habermann K."/>
            <person name="Parnell L."/>
            <person name="Dedhia N."/>
            <person name="Gnoj L."/>
            <person name="Schutz K."/>
            <person name="Huang E."/>
            <person name="Spiegel L."/>
            <person name="Sekhon M."/>
            <person name="Murray J."/>
            <person name="Sheet P."/>
            <person name="Cordes M."/>
            <person name="Abu-Threideh J."/>
            <person name="Stoneking T."/>
            <person name="Kalicki J."/>
            <person name="Graves T."/>
            <person name="Harmon G."/>
            <person name="Edwards J."/>
            <person name="Latreille P."/>
            <person name="Courtney L."/>
            <person name="Cloud J."/>
            <person name="Abbott A."/>
            <person name="Scott K."/>
            <person name="Johnson D."/>
            <person name="Minx P."/>
            <person name="Bentley D."/>
            <person name="Fulton B."/>
            <person name="Miller N."/>
            <person name="Greco T."/>
            <person name="Kemp K."/>
            <person name="Kramer J."/>
            <person name="Fulton L."/>
            <person name="Mardis E."/>
            <person name="Dante M."/>
            <person name="Pepin K."/>
            <person name="Hillier L.W."/>
            <person name="Nelson J."/>
            <person name="Spieth J."/>
            <person name="Ryan E."/>
            <person name="Andrews S."/>
            <person name="Geisel C."/>
            <person name="Layman D."/>
            <person name="Du H."/>
            <person name="Ali J."/>
            <person name="Berghoff A."/>
            <person name="Jones K."/>
            <person name="Drone K."/>
            <person name="Cotton M."/>
            <person name="Joshu C."/>
            <person name="Antonoiu B."/>
            <person name="Zidanic M."/>
            <person name="Strong C."/>
            <person name="Sun H."/>
            <person name="Lamar B."/>
            <person name="Yordan C."/>
            <person name="Ma P."/>
            <person name="Zhong J."/>
            <person name="Preston R."/>
            <person name="Vil D."/>
            <person name="Shekher M."/>
            <person name="Matero A."/>
            <person name="Shah R."/>
            <person name="Swaby I.K."/>
            <person name="O'Shaughnessy A."/>
            <person name="Rodriguez M."/>
            <person name="Hoffman J."/>
            <person name="Till S."/>
            <person name="Granat S."/>
            <person name="Shohdy N."/>
            <person name="Hasegawa A."/>
            <person name="Hameed A."/>
            <person name="Lodhi M."/>
            <person name="Johnson A."/>
            <person name="Chen E."/>
            <person name="Marra M.A."/>
            <person name="Martienssen R."/>
            <person name="McCombie W.R."/>
        </authorList>
    </citation>
    <scope>NUCLEOTIDE SEQUENCE [LARGE SCALE GENOMIC DNA]</scope>
    <source>
        <strain>cv. Columbia</strain>
    </source>
</reference>
<reference key="4">
    <citation type="journal article" date="2017" name="Plant J.">
        <title>Araport11: a complete reannotation of the Arabidopsis thaliana reference genome.</title>
        <authorList>
            <person name="Cheng C.Y."/>
            <person name="Krishnakumar V."/>
            <person name="Chan A.P."/>
            <person name="Thibaud-Nissen F."/>
            <person name="Schobel S."/>
            <person name="Town C.D."/>
        </authorList>
    </citation>
    <scope>GENOME REANNOTATION</scope>
    <source>
        <strain>cv. Columbia</strain>
    </source>
</reference>
<reference key="5">
    <citation type="journal article" date="2006" name="Plant Biotechnol. J.">
        <title>Simultaneous high-throughput recombinational cloning of open reading frames in closed and open configurations.</title>
        <authorList>
            <person name="Underwood B.A."/>
            <person name="Vanderhaeghen R."/>
            <person name="Whitford R."/>
            <person name="Town C.D."/>
            <person name="Hilson P."/>
        </authorList>
    </citation>
    <scope>NUCLEOTIDE SEQUENCE [LARGE SCALE MRNA]</scope>
    <source>
        <strain>cv. Columbia</strain>
    </source>
</reference>
<reference key="6">
    <citation type="journal article" date="2001" name="Curr. Opin. Plant Biol.">
        <title>The R2R3-MYB gene family in Arabidopsis thaliana.</title>
        <authorList>
            <person name="Stracke R."/>
            <person name="Werber M."/>
            <person name="Weisshaar B."/>
        </authorList>
    </citation>
    <scope>GENE FAMILY</scope>
    <scope>NOMENCLATURE</scope>
</reference>
<reference key="7">
    <citation type="journal article" date="2007" name="Plant Cell">
        <title>MYB98 positively regulates a battery of synergid-expressed genes encoding filiform apparatus localized proteins.</title>
        <authorList>
            <person name="Punwani J.A."/>
            <person name="Rabiger D.S."/>
            <person name="Drews G.N."/>
        </authorList>
    </citation>
    <scope>FUNCTION</scope>
    <scope>SUBCELLULAR LOCATION</scope>
    <scope>TISSUE SPECIFICITY</scope>
    <source>
        <strain>cv. Columbia</strain>
    </source>
</reference>
<reference key="8">
    <citation type="journal article" date="2007" name="PLoS Genet.">
        <title>Genome-wide expression profiling of the Arabidopsis female gametophyte identifies families of small, secreted proteins.</title>
        <authorList>
            <person name="Jones-Rhoades M.W."/>
            <person name="Borevitz J.O."/>
            <person name="Preuss D."/>
        </authorList>
    </citation>
    <scope>FUNCTION</scope>
    <scope>DISRUPTION PHENOTYPE</scope>
    <source>
        <strain>cv. Columbia</strain>
    </source>
</reference>
<reference key="9">
    <citation type="journal article" date="2008" name="Plant J.">
        <title>The MYB98 subcircuit of the synergid gene regulatory network includes genes directly and indirectly regulated by MYB98.</title>
        <authorList>
            <person name="Punwani J.A."/>
            <person name="Rabiger D.S."/>
            <person name="Lloyd A."/>
            <person name="Drews G.N."/>
        </authorList>
    </citation>
    <scope>FUNCTION</scope>
    <source>
        <strain>cv. Columbia</strain>
    </source>
</reference>
<reference key="10">
    <citation type="journal article" date="2012" name="Development">
        <title>Cytoplasmic Ca2+ changes dynamically during the interaction of the pollen tube with synergid cells.</title>
        <authorList>
            <person name="Iwano M."/>
            <person name="Ngo Q.A."/>
            <person name="Entani T."/>
            <person name="Shiba H."/>
            <person name="Nagai T."/>
            <person name="Miyawaki A."/>
            <person name="Isogai A."/>
            <person name="Grossniklaus U."/>
            <person name="Takayama S."/>
        </authorList>
    </citation>
    <scope>FUNCTION</scope>
    <scope>DISRUPTION PHENOTYPE</scope>
    <source>
        <strain>cv. Columbia</strain>
    </source>
</reference>
<feature type="chain" id="PRO_0000234360" description="Transcription factor MYB98">
    <location>
        <begin position="1"/>
        <end position="427"/>
    </location>
</feature>
<feature type="domain" description="HTH myb-type 1" evidence="1">
    <location>
        <begin position="212"/>
        <end position="267"/>
    </location>
</feature>
<feature type="domain" description="HTH myb-type 2" evidence="1">
    <location>
        <begin position="268"/>
        <end position="318"/>
    </location>
</feature>
<feature type="DNA-binding region" description="H-T-H motif" evidence="1">
    <location>
        <begin position="240"/>
        <end position="263"/>
    </location>
</feature>
<feature type="DNA-binding region" description="H-T-H motif" evidence="1">
    <location>
        <begin position="291"/>
        <end position="314"/>
    </location>
</feature>
<feature type="short sequence motif" description="Nuclear localization signal 1" evidence="2">
    <location>
        <begin position="195"/>
        <end position="202"/>
    </location>
</feature>
<feature type="short sequence motif" description="Nuclear localization signal 2" evidence="2">
    <location>
        <begin position="361"/>
        <end position="368"/>
    </location>
</feature>
<feature type="sequence conflict" description="In Ref. 2; ABA42061." evidence="9" ref="2">
    <original>N</original>
    <variation>T</variation>
    <location>
        <position position="82"/>
    </location>
</feature>
<feature type="sequence conflict" description="In Ref. 2; ABA42061." evidence="9" ref="2">
    <original>DF</original>
    <variation>EL</variation>
    <location>
        <begin position="96"/>
        <end position="97"/>
    </location>
</feature>
<feature type="sequence conflict" description="In Ref. 2; ABA42061." evidence="9" ref="2">
    <original>V</original>
    <variation>M</variation>
    <location>
        <position position="113"/>
    </location>
</feature>
<feature type="sequence conflict" description="In Ref. 2; ABA42061." evidence="9" ref="2">
    <original>H</original>
    <variation>HP</variation>
    <location>
        <position position="122"/>
    </location>
</feature>
<feature type="sequence conflict" description="In Ref. 2; ABA42061." evidence="9" ref="2">
    <location>
        <position position="136"/>
    </location>
</feature>
<gene>
    <name evidence="8" type="primary">MYB98</name>
    <name evidence="10" type="ordered locus">At4g18770</name>
    <name evidence="11" type="ORF">F28A21.180</name>
</gene>
<sequence>MENFVDENGFASLNQNIFTRDQEHMKEEDFPFEVVDQSKPTSFLQDFHHLDHDHQFDHHHHHGSSSSHPLLSVQTTSSCINNAPFEHCSYQENMVDFYETKPNLMNHHHFQAVENSYFTRNHHHHQEINLVDEHDDPMDLEQNNMMMMRMIPFDYPPTETFKPMNFVMPDEISCVSADNDCYRATSFNKTKPFLTRKLSSSSSSSSWKETKKSTLVKGQWTAEEDRVLIQLVEKYGLRKWSHIAQVLPGRIGKQCRERWHNHLRPDIKKETWSEEEDRVLIEFHKEIGNKWAEIAKRLPGRTENSIKNHWNATKRRQFSKRKCRSKYPRPSLLQDYIKSLNMGALMASSVPARGRRRESNNKKKDVVVAVEEKKKEEEVYGQDRIVPECVFTDDFGFNEKLLEEGCSIDSLLDDIPQPDIDAFVHGL</sequence>
<comment type="function">
    <text evidence="3 4 5 6 7">Transcription factor that binds to the motif 5'-GTAACNT-3' in the promoter of target genes (e.g. DD11 and DD18) and promotes their expression within synergid cells (e.g. in the filiform apparatus) in ovules (PubMed:16214903, PubMed:17693534, PubMed:17937500, PubMed:18410484). Required for the formation of the filiform apparatus during synergid cell differentiation in the female gametophyte (PubMed:16214903). Involved in pollen tube guidance to the micropyle (PubMed:16214903, PubMed:17937500, PubMed:23093426).</text>
</comment>
<comment type="subcellular location">
    <subcellularLocation>
        <location evidence="1 2 4">Nucleus</location>
    </subcellularLocation>
    <text evidence="4">Localized to the nuclei of the synergid cells.</text>
</comment>
<comment type="tissue specificity">
    <text evidence="3 4">Expressed at high levels in the synergid cells of the female gametophyte, and at lower levels in the endosperm of young seeds and the trichomes of young leaves and sepals.</text>
</comment>
<comment type="developmental stage">
    <text evidence="3">Expressed in cellularized but not uncellularized female gametophytes.</text>
</comment>
<comment type="disruption phenotype">
    <text evidence="5 7">Impaired in pollen tube attraction associated with a reduced cytoplasmic calcium burst during pollen tube tips growing (PubMed:17937500, PubMed:23093426). Altered expression of several ovule-specific genes (PubMed:17937500).</text>
</comment>
<comment type="sequence caution" evidence="9">
    <conflict type="erroneous termination">
        <sequence resource="EMBL-CDS" id="ABK28639"/>
    </conflict>
    <text>Extended C-terminus.</text>
</comment>